<accession>A7IA59</accession>
<comment type="function">
    <text evidence="1">Structure-specific nuclease with 5'-flap endonuclease and 5'-3' exonuclease activities involved in DNA replication and repair. During DNA replication, cleaves the 5'-overhanging flap structure that is generated by displacement synthesis when DNA polymerase encounters the 5'-end of a downstream Okazaki fragment. Binds the unpaired 3'-DNA end and kinks the DNA to facilitate 5' cleavage specificity. Cleaves one nucleotide into the double-stranded DNA from the junction in flap DNA, leaving a nick for ligation. Also involved in the base excision repair (BER) pathway. Acts as a genome stabilization factor that prevents flaps from equilibrating into structures that lead to duplications and deletions. Also possesses 5'-3' exonuclease activity on nicked or gapped double-stranded DNA (By similarity).</text>
</comment>
<comment type="cofactor">
    <cofactor evidence="2">
        <name>Mg(2+)</name>
        <dbReference type="ChEBI" id="CHEBI:18420"/>
    </cofactor>
    <text evidence="2">Binds 2 magnesium ions per subunit. They probably participate in the reaction catalyzed by the enzyme. May bind an additional third magnesium ion after substrate binding.</text>
</comment>
<comment type="subunit">
    <text evidence="2">Interacts with PCNA. PCNA stimulates the nuclease activity without altering cleavage specificity.</text>
</comment>
<comment type="similarity">
    <text evidence="2">Belongs to the XPG/RAD2 endonuclease family. FEN1 subfamily.</text>
</comment>
<proteinExistence type="inferred from homology"/>
<feature type="chain" id="PRO_1000061321" description="Flap endonuclease 1">
    <location>
        <begin position="1"/>
        <end position="333"/>
    </location>
</feature>
<feature type="region of interest" description="N-domain">
    <location>
        <begin position="1"/>
        <end position="99"/>
    </location>
</feature>
<feature type="region of interest" description="I-domain">
    <location>
        <begin position="117"/>
        <end position="256"/>
    </location>
</feature>
<feature type="region of interest" description="Interaction with PCNA" evidence="2">
    <location>
        <begin position="325"/>
        <end position="333"/>
    </location>
</feature>
<feature type="binding site" evidence="2">
    <location>
        <position position="28"/>
    </location>
    <ligand>
        <name>Mg(2+)</name>
        <dbReference type="ChEBI" id="CHEBI:18420"/>
        <label>1</label>
    </ligand>
</feature>
<feature type="binding site" evidence="2">
    <location>
        <position position="81"/>
    </location>
    <ligand>
        <name>Mg(2+)</name>
        <dbReference type="ChEBI" id="CHEBI:18420"/>
        <label>1</label>
    </ligand>
</feature>
<feature type="binding site" evidence="2">
    <location>
        <position position="153"/>
    </location>
    <ligand>
        <name>Mg(2+)</name>
        <dbReference type="ChEBI" id="CHEBI:18420"/>
        <label>1</label>
    </ligand>
</feature>
<feature type="binding site" evidence="2">
    <location>
        <position position="155"/>
    </location>
    <ligand>
        <name>Mg(2+)</name>
        <dbReference type="ChEBI" id="CHEBI:18420"/>
        <label>1</label>
    </ligand>
</feature>
<feature type="binding site" evidence="2">
    <location>
        <position position="174"/>
    </location>
    <ligand>
        <name>Mg(2+)</name>
        <dbReference type="ChEBI" id="CHEBI:18420"/>
        <label>2</label>
    </ligand>
</feature>
<feature type="binding site" evidence="2">
    <location>
        <position position="176"/>
    </location>
    <ligand>
        <name>Mg(2+)</name>
        <dbReference type="ChEBI" id="CHEBI:18420"/>
        <label>2</label>
    </ligand>
</feature>
<feature type="binding site" evidence="2">
    <location>
        <position position="235"/>
    </location>
    <ligand>
        <name>Mg(2+)</name>
        <dbReference type="ChEBI" id="CHEBI:18420"/>
        <label>2</label>
    </ligand>
</feature>
<reference key="1">
    <citation type="journal article" date="2015" name="Microbiology">
        <title>Genome of Methanoregula boonei 6A8 reveals adaptations to oligotrophic peatland environments.</title>
        <authorList>
            <person name="Braeuer S."/>
            <person name="Cadillo-Quiroz H."/>
            <person name="Kyrpides N."/>
            <person name="Woyke T."/>
            <person name="Goodwin L."/>
            <person name="Detter C."/>
            <person name="Podell S."/>
            <person name="Yavitt J.B."/>
            <person name="Zinder S.H."/>
        </authorList>
    </citation>
    <scope>NUCLEOTIDE SEQUENCE [LARGE SCALE GENOMIC DNA]</scope>
    <source>
        <strain>DSM 21154 / JCM 14090 / 6A8</strain>
    </source>
</reference>
<name>FEN_METB6</name>
<sequence length="333" mass="36450">MGVALRDILADYKTPVTWEGLSGVAAVDANNTLYQFLTIIRQPDGTPLMDAKGRVTSHLSGILFRMVNFLEKGIKPVFVFDGKPPELKQETNAERKKLRDEAGEKYKEAVERGDEEEAYRQARSATRVDETIIATSKELLDLLGIPYVQAPSEGEAQAAFMVQRGDARFAVSQDYDTLLFGAPLLMRNLTVSGKRKIRGRAVTVNPERLVLSEVLSGLSLTREQLVEVGILVGTDFNPGAAGVGAKTALKIVKSGGFAQKLAEKCPGFDPAPVADFFLKPPVTTEYELAWGHPCVEGIKKMLCDGYDFAPERVDAALERYSAKAGQKTLESFF</sequence>
<organism>
    <name type="scientific">Methanoregula boonei (strain DSM 21154 / JCM 14090 / 6A8)</name>
    <dbReference type="NCBI Taxonomy" id="456442"/>
    <lineage>
        <taxon>Archaea</taxon>
        <taxon>Methanobacteriati</taxon>
        <taxon>Methanobacteriota</taxon>
        <taxon>Stenosarchaea group</taxon>
        <taxon>Methanomicrobia</taxon>
        <taxon>Methanomicrobiales</taxon>
        <taxon>Methanoregulaceae</taxon>
        <taxon>Methanoregula</taxon>
    </lineage>
</organism>
<protein>
    <recommendedName>
        <fullName evidence="2">Flap endonuclease 1</fullName>
        <shortName evidence="2">FEN-1</shortName>
        <ecNumber evidence="2">3.1.-.-</ecNumber>
    </recommendedName>
    <alternativeName>
        <fullName evidence="2">Flap structure-specific endonuclease 1</fullName>
    </alternativeName>
</protein>
<keyword id="KW-0227">DNA damage</keyword>
<keyword id="KW-0234">DNA repair</keyword>
<keyword id="KW-0235">DNA replication</keyword>
<keyword id="KW-0255">Endonuclease</keyword>
<keyword id="KW-0269">Exonuclease</keyword>
<keyword id="KW-0378">Hydrolase</keyword>
<keyword id="KW-0460">Magnesium</keyword>
<keyword id="KW-0479">Metal-binding</keyword>
<keyword id="KW-0540">Nuclease</keyword>
<keyword id="KW-1185">Reference proteome</keyword>
<dbReference type="EC" id="3.1.-.-" evidence="2"/>
<dbReference type="EMBL" id="CP000780">
    <property type="protein sequence ID" value="ABS56620.1"/>
    <property type="molecule type" value="Genomic_DNA"/>
</dbReference>
<dbReference type="RefSeq" id="WP_012107676.1">
    <property type="nucleotide sequence ID" value="NC_009712.1"/>
</dbReference>
<dbReference type="SMR" id="A7IA59"/>
<dbReference type="STRING" id="456442.Mboo_2106"/>
<dbReference type="GeneID" id="5410640"/>
<dbReference type="KEGG" id="mbn:Mboo_2106"/>
<dbReference type="eggNOG" id="arCOG04050">
    <property type="taxonomic scope" value="Archaea"/>
</dbReference>
<dbReference type="HOGENOM" id="CLU_032444_0_0_2"/>
<dbReference type="OrthoDB" id="9593at2157"/>
<dbReference type="Proteomes" id="UP000002408">
    <property type="component" value="Chromosome"/>
</dbReference>
<dbReference type="GO" id="GO:0008409">
    <property type="term" value="F:5'-3' exonuclease activity"/>
    <property type="evidence" value="ECO:0007669"/>
    <property type="project" value="UniProtKB-UniRule"/>
</dbReference>
<dbReference type="GO" id="GO:0017108">
    <property type="term" value="F:5'-flap endonuclease activity"/>
    <property type="evidence" value="ECO:0007669"/>
    <property type="project" value="UniProtKB-UniRule"/>
</dbReference>
<dbReference type="GO" id="GO:0003677">
    <property type="term" value="F:DNA binding"/>
    <property type="evidence" value="ECO:0007669"/>
    <property type="project" value="UniProtKB-UniRule"/>
</dbReference>
<dbReference type="GO" id="GO:0000287">
    <property type="term" value="F:magnesium ion binding"/>
    <property type="evidence" value="ECO:0007669"/>
    <property type="project" value="UniProtKB-UniRule"/>
</dbReference>
<dbReference type="GO" id="GO:0006281">
    <property type="term" value="P:DNA repair"/>
    <property type="evidence" value="ECO:0007669"/>
    <property type="project" value="UniProtKB-UniRule"/>
</dbReference>
<dbReference type="GO" id="GO:0043137">
    <property type="term" value="P:DNA replication, removal of RNA primer"/>
    <property type="evidence" value="ECO:0007669"/>
    <property type="project" value="UniProtKB-UniRule"/>
</dbReference>
<dbReference type="CDD" id="cd09867">
    <property type="entry name" value="PIN_FEN1"/>
    <property type="match status" value="1"/>
</dbReference>
<dbReference type="FunFam" id="3.40.50.1010:FF:000016">
    <property type="entry name" value="Flap endonuclease 1"/>
    <property type="match status" value="1"/>
</dbReference>
<dbReference type="Gene3D" id="1.10.150.20">
    <property type="entry name" value="5' to 3' exonuclease, C-terminal subdomain"/>
    <property type="match status" value="1"/>
</dbReference>
<dbReference type="Gene3D" id="3.40.50.1010">
    <property type="entry name" value="5'-nuclease"/>
    <property type="match status" value="1"/>
</dbReference>
<dbReference type="HAMAP" id="MF_00614">
    <property type="entry name" value="Fen"/>
    <property type="match status" value="1"/>
</dbReference>
<dbReference type="InterPro" id="IPR036279">
    <property type="entry name" value="5-3_exonuclease_C_sf"/>
</dbReference>
<dbReference type="InterPro" id="IPR023426">
    <property type="entry name" value="Flap_endonuc"/>
</dbReference>
<dbReference type="InterPro" id="IPR019973">
    <property type="entry name" value="Flap_endonuc_arc"/>
</dbReference>
<dbReference type="InterPro" id="IPR008918">
    <property type="entry name" value="HhH2"/>
</dbReference>
<dbReference type="InterPro" id="IPR029060">
    <property type="entry name" value="PIN-like_dom_sf"/>
</dbReference>
<dbReference type="InterPro" id="IPR006086">
    <property type="entry name" value="XPG-I_dom"/>
</dbReference>
<dbReference type="InterPro" id="IPR006084">
    <property type="entry name" value="XPG/Rad2"/>
</dbReference>
<dbReference type="InterPro" id="IPR019974">
    <property type="entry name" value="XPG_CS"/>
</dbReference>
<dbReference type="InterPro" id="IPR006085">
    <property type="entry name" value="XPG_DNA_repair_N"/>
</dbReference>
<dbReference type="NCBIfam" id="TIGR03674">
    <property type="entry name" value="fen_arch"/>
    <property type="match status" value="1"/>
</dbReference>
<dbReference type="PANTHER" id="PTHR11081:SF9">
    <property type="entry name" value="FLAP ENDONUCLEASE 1"/>
    <property type="match status" value="1"/>
</dbReference>
<dbReference type="PANTHER" id="PTHR11081">
    <property type="entry name" value="FLAP ENDONUCLEASE FAMILY MEMBER"/>
    <property type="match status" value="1"/>
</dbReference>
<dbReference type="Pfam" id="PF00867">
    <property type="entry name" value="XPG_I"/>
    <property type="match status" value="1"/>
</dbReference>
<dbReference type="Pfam" id="PF00752">
    <property type="entry name" value="XPG_N"/>
    <property type="match status" value="1"/>
</dbReference>
<dbReference type="PRINTS" id="PR00853">
    <property type="entry name" value="XPGRADSUPER"/>
</dbReference>
<dbReference type="SMART" id="SM00279">
    <property type="entry name" value="HhH2"/>
    <property type="match status" value="1"/>
</dbReference>
<dbReference type="SMART" id="SM00484">
    <property type="entry name" value="XPGI"/>
    <property type="match status" value="1"/>
</dbReference>
<dbReference type="SMART" id="SM00485">
    <property type="entry name" value="XPGN"/>
    <property type="match status" value="1"/>
</dbReference>
<dbReference type="SUPFAM" id="SSF47807">
    <property type="entry name" value="5' to 3' exonuclease, C-terminal subdomain"/>
    <property type="match status" value="1"/>
</dbReference>
<dbReference type="SUPFAM" id="SSF88723">
    <property type="entry name" value="PIN domain-like"/>
    <property type="match status" value="1"/>
</dbReference>
<dbReference type="PROSITE" id="PS00841">
    <property type="entry name" value="XPG_1"/>
    <property type="match status" value="1"/>
</dbReference>
<evidence type="ECO:0000250" key="1"/>
<evidence type="ECO:0000255" key="2">
    <source>
        <dbReference type="HAMAP-Rule" id="MF_00614"/>
    </source>
</evidence>
<gene>
    <name evidence="2" type="primary">fen</name>
    <name type="ordered locus">Mboo_2106</name>
</gene>